<comment type="function">
    <text evidence="4">Permease for high affinity iron uptake.</text>
</comment>
<comment type="subcellular location">
    <subcellularLocation>
        <location evidence="5">Membrane</location>
        <topology evidence="5">Multi-pass membrane protein</topology>
    </subcellularLocation>
</comment>
<comment type="similarity">
    <text evidence="5">Belongs to the oxidase-dependent Fe transporter (OFeT) (TC 9.A.10.1) family.</text>
</comment>
<accession>Q09919</accession>
<gene>
    <name type="primary">fip1</name>
    <name type="ORF">SPAC1F7.07c</name>
</gene>
<reference key="1">
    <citation type="journal article" date="2002" name="Nature">
        <title>The genome sequence of Schizosaccharomyces pombe.</title>
        <authorList>
            <person name="Wood V."/>
            <person name="Gwilliam R."/>
            <person name="Rajandream M.A."/>
            <person name="Lyne M.H."/>
            <person name="Lyne R."/>
            <person name="Stewart A."/>
            <person name="Sgouros J.G."/>
            <person name="Peat N."/>
            <person name="Hayles J."/>
            <person name="Baker S.G."/>
            <person name="Basham D."/>
            <person name="Bowman S."/>
            <person name="Brooks K."/>
            <person name="Brown D."/>
            <person name="Brown S."/>
            <person name="Chillingworth T."/>
            <person name="Churcher C.M."/>
            <person name="Collins M."/>
            <person name="Connor R."/>
            <person name="Cronin A."/>
            <person name="Davis P."/>
            <person name="Feltwell T."/>
            <person name="Fraser A."/>
            <person name="Gentles S."/>
            <person name="Goble A."/>
            <person name="Hamlin N."/>
            <person name="Harris D.E."/>
            <person name="Hidalgo J."/>
            <person name="Hodgson G."/>
            <person name="Holroyd S."/>
            <person name="Hornsby T."/>
            <person name="Howarth S."/>
            <person name="Huckle E.J."/>
            <person name="Hunt S."/>
            <person name="Jagels K."/>
            <person name="James K.D."/>
            <person name="Jones L."/>
            <person name="Jones M."/>
            <person name="Leather S."/>
            <person name="McDonald S."/>
            <person name="McLean J."/>
            <person name="Mooney P."/>
            <person name="Moule S."/>
            <person name="Mungall K.L."/>
            <person name="Murphy L.D."/>
            <person name="Niblett D."/>
            <person name="Odell C."/>
            <person name="Oliver K."/>
            <person name="O'Neil S."/>
            <person name="Pearson D."/>
            <person name="Quail M.A."/>
            <person name="Rabbinowitsch E."/>
            <person name="Rutherford K.M."/>
            <person name="Rutter S."/>
            <person name="Saunders D."/>
            <person name="Seeger K."/>
            <person name="Sharp S."/>
            <person name="Skelton J."/>
            <person name="Simmonds M.N."/>
            <person name="Squares R."/>
            <person name="Squares S."/>
            <person name="Stevens K."/>
            <person name="Taylor K."/>
            <person name="Taylor R.G."/>
            <person name="Tivey A."/>
            <person name="Walsh S.V."/>
            <person name="Warren T."/>
            <person name="Whitehead S."/>
            <person name="Woodward J.R."/>
            <person name="Volckaert G."/>
            <person name="Aert R."/>
            <person name="Robben J."/>
            <person name="Grymonprez B."/>
            <person name="Weltjens I."/>
            <person name="Vanstreels E."/>
            <person name="Rieger M."/>
            <person name="Schaefer M."/>
            <person name="Mueller-Auer S."/>
            <person name="Gabel C."/>
            <person name="Fuchs M."/>
            <person name="Duesterhoeft A."/>
            <person name="Fritzc C."/>
            <person name="Holzer E."/>
            <person name="Moestl D."/>
            <person name="Hilbert H."/>
            <person name="Borzym K."/>
            <person name="Langer I."/>
            <person name="Beck A."/>
            <person name="Lehrach H."/>
            <person name="Reinhardt R."/>
            <person name="Pohl T.M."/>
            <person name="Eger P."/>
            <person name="Zimmermann W."/>
            <person name="Wedler H."/>
            <person name="Wambutt R."/>
            <person name="Purnelle B."/>
            <person name="Goffeau A."/>
            <person name="Cadieu E."/>
            <person name="Dreano S."/>
            <person name="Gloux S."/>
            <person name="Lelaure V."/>
            <person name="Mottier S."/>
            <person name="Galibert F."/>
            <person name="Aves S.J."/>
            <person name="Xiang Z."/>
            <person name="Hunt C."/>
            <person name="Moore K."/>
            <person name="Hurst S.M."/>
            <person name="Lucas M."/>
            <person name="Rochet M."/>
            <person name="Gaillardin C."/>
            <person name="Tallada V.A."/>
            <person name="Garzon A."/>
            <person name="Thode G."/>
            <person name="Daga R.R."/>
            <person name="Cruzado L."/>
            <person name="Jimenez J."/>
            <person name="Sanchez M."/>
            <person name="del Rey F."/>
            <person name="Benito J."/>
            <person name="Dominguez A."/>
            <person name="Revuelta J.L."/>
            <person name="Moreno S."/>
            <person name="Armstrong J."/>
            <person name="Forsburg S.L."/>
            <person name="Cerutti L."/>
            <person name="Lowe T."/>
            <person name="McCombie W.R."/>
            <person name="Paulsen I."/>
            <person name="Potashkin J."/>
            <person name="Shpakovski G.V."/>
            <person name="Ussery D."/>
            <person name="Barrell B.G."/>
            <person name="Nurse P."/>
        </authorList>
    </citation>
    <scope>NUCLEOTIDE SEQUENCE [LARGE SCALE GENOMIC DNA]</scope>
    <source>
        <strain>972 / ATCC 24843</strain>
    </source>
</reference>
<reference key="2">
    <citation type="journal article" date="1997" name="J. Biol. Chem.">
        <title>An oxidase-permease-based iron transport system in Schizosaccharomyces pombe and its expression in Saccharomyces cerevisiae.</title>
        <authorList>
            <person name="Askwith C."/>
            <person name="Kaplan J."/>
        </authorList>
    </citation>
    <scope>FUNCTION</scope>
</reference>
<reference key="3">
    <citation type="journal article" date="2008" name="J. Proteome Res.">
        <title>Phosphoproteome analysis of fission yeast.</title>
        <authorList>
            <person name="Wilson-Grady J.T."/>
            <person name="Villen J."/>
            <person name="Gygi S.P."/>
        </authorList>
    </citation>
    <scope>PHOSPHORYLATION [LARGE SCALE ANALYSIS] AT SER-337; SER-338; THR-340; SER-346; SER-347; SER-355; THR-357; SER-374; SER-375 AND SER-376</scope>
    <scope>IDENTIFICATION BY MASS SPECTROMETRY</scope>
</reference>
<name>FIP1_SCHPO</name>
<proteinExistence type="evidence at protein level"/>
<protein>
    <recommendedName>
        <fullName>Plasma membrane iron permease</fullName>
    </recommendedName>
</protein>
<dbReference type="EMBL" id="CU329670">
    <property type="protein sequence ID" value="CAA91954.1"/>
    <property type="molecule type" value="Genomic_DNA"/>
</dbReference>
<dbReference type="PIR" id="S62579">
    <property type="entry name" value="S62579"/>
</dbReference>
<dbReference type="RefSeq" id="NP_594493.1">
    <property type="nucleotide sequence ID" value="NM_001019922.2"/>
</dbReference>
<dbReference type="BioGRID" id="278056">
    <property type="interactions" value="3"/>
</dbReference>
<dbReference type="FunCoup" id="Q09919">
    <property type="interactions" value="47"/>
</dbReference>
<dbReference type="STRING" id="284812.Q09919"/>
<dbReference type="TCDB" id="2.A.108.1.5">
    <property type="family name" value="the iron/lead transporter (ilt) family"/>
</dbReference>
<dbReference type="iPTMnet" id="Q09919"/>
<dbReference type="PaxDb" id="4896-SPAC1F7.07c.1"/>
<dbReference type="EnsemblFungi" id="SPAC1F7.07c.1">
    <property type="protein sequence ID" value="SPAC1F7.07c.1:pep"/>
    <property type="gene ID" value="SPAC1F7.07c"/>
</dbReference>
<dbReference type="GeneID" id="2541557"/>
<dbReference type="KEGG" id="spo:2541557"/>
<dbReference type="PomBase" id="SPAC1F7.07c">
    <property type="gene designation" value="fip1"/>
</dbReference>
<dbReference type="VEuPathDB" id="FungiDB:SPAC1F7.07c"/>
<dbReference type="eggNOG" id="ENOG502QQWE">
    <property type="taxonomic scope" value="Eukaryota"/>
</dbReference>
<dbReference type="HOGENOM" id="CLU_046738_1_1_1"/>
<dbReference type="InParanoid" id="Q09919"/>
<dbReference type="OMA" id="SVWHLDC"/>
<dbReference type="PhylomeDB" id="Q09919"/>
<dbReference type="PRO" id="PR:Q09919"/>
<dbReference type="Proteomes" id="UP000002485">
    <property type="component" value="Chromosome I"/>
</dbReference>
<dbReference type="GO" id="GO:0005794">
    <property type="term" value="C:Golgi apparatus"/>
    <property type="evidence" value="ECO:0007005"/>
    <property type="project" value="PomBase"/>
</dbReference>
<dbReference type="GO" id="GO:0033573">
    <property type="term" value="C:high-affinity iron permease complex"/>
    <property type="evidence" value="ECO:0000316"/>
    <property type="project" value="PomBase"/>
</dbReference>
<dbReference type="GO" id="GO:0005886">
    <property type="term" value="C:plasma membrane"/>
    <property type="evidence" value="ECO:0000318"/>
    <property type="project" value="GO_Central"/>
</dbReference>
<dbReference type="GO" id="GO:0015093">
    <property type="term" value="F:ferrous iron transmembrane transporter activity"/>
    <property type="evidence" value="ECO:0000318"/>
    <property type="project" value="GO_Central"/>
</dbReference>
<dbReference type="GO" id="GO:0061840">
    <property type="term" value="F:high-affinity ferrous iron transmembrane transporter activity"/>
    <property type="evidence" value="ECO:0000316"/>
    <property type="project" value="PomBase"/>
</dbReference>
<dbReference type="GO" id="GO:0034755">
    <property type="term" value="P:iron ion transmembrane transport"/>
    <property type="evidence" value="ECO:0000318"/>
    <property type="project" value="GO_Central"/>
</dbReference>
<dbReference type="GO" id="GO:0033215">
    <property type="term" value="P:reductive iron assimilation"/>
    <property type="evidence" value="ECO:0000315"/>
    <property type="project" value="PomBase"/>
</dbReference>
<dbReference type="InterPro" id="IPR004923">
    <property type="entry name" value="FTR1/Fip1/EfeU"/>
</dbReference>
<dbReference type="PANTHER" id="PTHR31632">
    <property type="entry name" value="IRON TRANSPORTER FTH1"/>
    <property type="match status" value="1"/>
</dbReference>
<dbReference type="PANTHER" id="PTHR31632:SF2">
    <property type="entry name" value="PLASMA MEMBRANE IRON PERMEASE"/>
    <property type="match status" value="1"/>
</dbReference>
<dbReference type="Pfam" id="PF03239">
    <property type="entry name" value="FTR1"/>
    <property type="match status" value="1"/>
</dbReference>
<sequence>MAKDVFSVAIFFIVLRETLEASIIVSVLMSFISQTLMDKDGNVTDPKLKRKFMLQVWIGSFTALFICLAIGGGFIGAFYALDKDIWSGSEEIWEGVFSLIAVVLITVMGFAMLRVSHLQEKWRKKLMKSIANRKAKGISNWGKKYSMFLLPFFTVLREGLEVVVFVGGVGLETPATAFPLPVICGLIVGCLIGYFIYRGGNVMNLQWFLIASTCILYLISAGLMSKATFYFEMNKWNHQTGGDAGELGDGPGSYPFKSAVWHVNYGNPEMNSNGGYMIFNAILGWNNTGTYGSILSYIIYWLFVAFIMFLMWYKERRAARLLIAKLGDKVVDLEAASSHTPVQSSSSEDEFKINSPTDDKGDKAIDIVTEVRESSSPVEEHKDDKTVDVINEIRESH</sequence>
<evidence type="ECO:0000255" key="1"/>
<evidence type="ECO:0000256" key="2">
    <source>
        <dbReference type="SAM" id="MobiDB-lite"/>
    </source>
</evidence>
<evidence type="ECO:0000269" key="3">
    <source>
    </source>
</evidence>
<evidence type="ECO:0000269" key="4">
    <source>
    </source>
</evidence>
<evidence type="ECO:0000305" key="5"/>
<keyword id="KW-0406">Ion transport</keyword>
<keyword id="KW-0408">Iron</keyword>
<keyword id="KW-0410">Iron transport</keyword>
<keyword id="KW-0472">Membrane</keyword>
<keyword id="KW-0597">Phosphoprotein</keyword>
<keyword id="KW-1185">Reference proteome</keyword>
<keyword id="KW-0812">Transmembrane</keyword>
<keyword id="KW-1133">Transmembrane helix</keyword>
<keyword id="KW-0813">Transport</keyword>
<feature type="chain" id="PRO_0000159651" description="Plasma membrane iron permease">
    <location>
        <begin position="1"/>
        <end position="397"/>
    </location>
</feature>
<feature type="transmembrane region" description="Helical" evidence="1">
    <location>
        <begin position="61"/>
        <end position="81"/>
    </location>
</feature>
<feature type="transmembrane region" description="Helical" evidence="1">
    <location>
        <begin position="92"/>
        <end position="112"/>
    </location>
</feature>
<feature type="transmembrane region" description="Helical" evidence="1">
    <location>
        <begin position="177"/>
        <end position="197"/>
    </location>
</feature>
<feature type="transmembrane region" description="Helical" evidence="1">
    <location>
        <begin position="292"/>
        <end position="312"/>
    </location>
</feature>
<feature type="region of interest" description="Disordered" evidence="2">
    <location>
        <begin position="337"/>
        <end position="364"/>
    </location>
</feature>
<feature type="compositionally biased region" description="Polar residues" evidence="2">
    <location>
        <begin position="337"/>
        <end position="346"/>
    </location>
</feature>
<feature type="compositionally biased region" description="Basic and acidic residues" evidence="2">
    <location>
        <begin position="349"/>
        <end position="364"/>
    </location>
</feature>
<feature type="modified residue" description="Phosphoserine" evidence="3">
    <location>
        <position position="337"/>
    </location>
</feature>
<feature type="modified residue" description="Phosphoserine" evidence="3">
    <location>
        <position position="338"/>
    </location>
</feature>
<feature type="modified residue" description="Phosphothreonine" evidence="3">
    <location>
        <position position="340"/>
    </location>
</feature>
<feature type="modified residue" description="Phosphoserine" evidence="3">
    <location>
        <position position="346"/>
    </location>
</feature>
<feature type="modified residue" description="Phosphoserine" evidence="3">
    <location>
        <position position="347"/>
    </location>
</feature>
<feature type="modified residue" description="Phosphoserine" evidence="3">
    <location>
        <position position="355"/>
    </location>
</feature>
<feature type="modified residue" description="Phosphothreonine" evidence="3">
    <location>
        <position position="357"/>
    </location>
</feature>
<feature type="modified residue" description="Phosphoserine" evidence="3">
    <location>
        <position position="374"/>
    </location>
</feature>
<feature type="modified residue" description="Phosphoserine" evidence="3">
    <location>
        <position position="375"/>
    </location>
</feature>
<feature type="modified residue" description="Phosphoserine" evidence="3">
    <location>
        <position position="376"/>
    </location>
</feature>
<organism>
    <name type="scientific">Schizosaccharomyces pombe (strain 972 / ATCC 24843)</name>
    <name type="common">Fission yeast</name>
    <dbReference type="NCBI Taxonomy" id="284812"/>
    <lineage>
        <taxon>Eukaryota</taxon>
        <taxon>Fungi</taxon>
        <taxon>Dikarya</taxon>
        <taxon>Ascomycota</taxon>
        <taxon>Taphrinomycotina</taxon>
        <taxon>Schizosaccharomycetes</taxon>
        <taxon>Schizosaccharomycetales</taxon>
        <taxon>Schizosaccharomycetaceae</taxon>
        <taxon>Schizosaccharomyces</taxon>
    </lineage>
</organism>